<feature type="chain" id="PRO_1000051381" description="Asparagine--tRNA ligase">
    <location>
        <begin position="1"/>
        <end position="470"/>
    </location>
</feature>
<sequence length="470" mass="54210">MNVVSVVDILSGHVSKNTEITIQGWIRTRRDSKAKISFLDLYDGSCINSLQIIAYDKLHNYKNEILRLTSGCSVIIVGIIVKSIGIKQHVEVIAKNIKILGWIEDPSTYPITAKKHTMEYLREVSHLRPRTNTIGAVARIRDTLSQAIHNFLHKQGFIWIPTPIITACDTEGSSKMFCVSTSETQKILNNPNEKLHHTHDTTYDFFSKKAFLTVSGQLNAEAYACALSKVYTFGPTFRAEYSNTNRHLAEFWMIEPEAAFMTLDDIIILAESLLKNIIRILLEKRSDDIKYLVDKINKNIITILENFSEIKFNHIEYTEAIKLLEICNRKFNNPIHWGTDLFSEHEKYLSEEYFKSPVIIKNFPKNIKAFYMRLNDDNKTVASMDILVPGIGEIIGGSQREERLSKLDQRLQENCLTQENYWWYRDLRRYGTVPHSGFGLGFERLMIYVTGIKNIRDVIPFPRTSKNINF</sequence>
<name>SYN_BLOPB</name>
<organism>
    <name type="scientific">Blochmanniella pennsylvanica (strain BPEN)</name>
    <dbReference type="NCBI Taxonomy" id="291272"/>
    <lineage>
        <taxon>Bacteria</taxon>
        <taxon>Pseudomonadati</taxon>
        <taxon>Pseudomonadota</taxon>
        <taxon>Gammaproteobacteria</taxon>
        <taxon>Enterobacterales</taxon>
        <taxon>Enterobacteriaceae</taxon>
        <taxon>ant endosymbionts</taxon>
        <taxon>Candidatus Blochmanniella</taxon>
    </lineage>
</organism>
<protein>
    <recommendedName>
        <fullName evidence="1">Asparagine--tRNA ligase</fullName>
        <ecNumber evidence="1">6.1.1.22</ecNumber>
    </recommendedName>
    <alternativeName>
        <fullName evidence="1">Asparaginyl-tRNA synthetase</fullName>
        <shortName evidence="1">AsnRS</shortName>
    </alternativeName>
</protein>
<gene>
    <name evidence="1" type="primary">asnS</name>
    <name type="ordered locus">BPEN_433</name>
</gene>
<keyword id="KW-0030">Aminoacyl-tRNA synthetase</keyword>
<keyword id="KW-0067">ATP-binding</keyword>
<keyword id="KW-0963">Cytoplasm</keyword>
<keyword id="KW-0436">Ligase</keyword>
<keyword id="KW-0547">Nucleotide-binding</keyword>
<keyword id="KW-0648">Protein biosynthesis</keyword>
<keyword id="KW-1185">Reference proteome</keyword>
<comment type="catalytic activity">
    <reaction evidence="1">
        <text>tRNA(Asn) + L-asparagine + ATP = L-asparaginyl-tRNA(Asn) + AMP + diphosphate + H(+)</text>
        <dbReference type="Rhea" id="RHEA:11180"/>
        <dbReference type="Rhea" id="RHEA-COMP:9659"/>
        <dbReference type="Rhea" id="RHEA-COMP:9674"/>
        <dbReference type="ChEBI" id="CHEBI:15378"/>
        <dbReference type="ChEBI" id="CHEBI:30616"/>
        <dbReference type="ChEBI" id="CHEBI:33019"/>
        <dbReference type="ChEBI" id="CHEBI:58048"/>
        <dbReference type="ChEBI" id="CHEBI:78442"/>
        <dbReference type="ChEBI" id="CHEBI:78515"/>
        <dbReference type="ChEBI" id="CHEBI:456215"/>
        <dbReference type="EC" id="6.1.1.22"/>
    </reaction>
</comment>
<comment type="subunit">
    <text evidence="1">Homodimer.</text>
</comment>
<comment type="subcellular location">
    <subcellularLocation>
        <location evidence="1">Cytoplasm</location>
    </subcellularLocation>
</comment>
<comment type="similarity">
    <text evidence="1">Belongs to the class-II aminoacyl-tRNA synthetase family.</text>
</comment>
<reference key="1">
    <citation type="journal article" date="2005" name="Genome Res.">
        <title>Genome sequence of Blochmannia pennsylvanicus indicates parallel evolutionary trends among bacterial mutualists of insects.</title>
        <authorList>
            <person name="Degnan P.H."/>
            <person name="Lazarus A.B."/>
            <person name="Wernegreen J.J."/>
        </authorList>
    </citation>
    <scope>NUCLEOTIDE SEQUENCE [LARGE SCALE GENOMIC DNA]</scope>
    <source>
        <strain>BPEN</strain>
    </source>
</reference>
<evidence type="ECO:0000255" key="1">
    <source>
        <dbReference type="HAMAP-Rule" id="MF_00534"/>
    </source>
</evidence>
<proteinExistence type="inferred from homology"/>
<dbReference type="EC" id="6.1.1.22" evidence="1"/>
<dbReference type="EMBL" id="CP000016">
    <property type="protein sequence ID" value="AAZ41052.1"/>
    <property type="molecule type" value="Genomic_DNA"/>
</dbReference>
<dbReference type="RefSeq" id="WP_011282962.1">
    <property type="nucleotide sequence ID" value="NC_007292.1"/>
</dbReference>
<dbReference type="SMR" id="Q492P3"/>
<dbReference type="STRING" id="291272.BPEN_433"/>
<dbReference type="KEGG" id="bpn:BPEN_433"/>
<dbReference type="eggNOG" id="COG0017">
    <property type="taxonomic scope" value="Bacteria"/>
</dbReference>
<dbReference type="HOGENOM" id="CLU_004553_2_0_6"/>
<dbReference type="OrthoDB" id="9762036at2"/>
<dbReference type="Proteomes" id="UP000007794">
    <property type="component" value="Chromosome"/>
</dbReference>
<dbReference type="GO" id="GO:0005737">
    <property type="term" value="C:cytoplasm"/>
    <property type="evidence" value="ECO:0007669"/>
    <property type="project" value="UniProtKB-SubCell"/>
</dbReference>
<dbReference type="GO" id="GO:0004816">
    <property type="term" value="F:asparagine-tRNA ligase activity"/>
    <property type="evidence" value="ECO:0007669"/>
    <property type="project" value="UniProtKB-UniRule"/>
</dbReference>
<dbReference type="GO" id="GO:0005524">
    <property type="term" value="F:ATP binding"/>
    <property type="evidence" value="ECO:0007669"/>
    <property type="project" value="UniProtKB-UniRule"/>
</dbReference>
<dbReference type="GO" id="GO:0003676">
    <property type="term" value="F:nucleic acid binding"/>
    <property type="evidence" value="ECO:0007669"/>
    <property type="project" value="InterPro"/>
</dbReference>
<dbReference type="GO" id="GO:0006421">
    <property type="term" value="P:asparaginyl-tRNA aminoacylation"/>
    <property type="evidence" value="ECO:0007669"/>
    <property type="project" value="UniProtKB-UniRule"/>
</dbReference>
<dbReference type="CDD" id="cd00776">
    <property type="entry name" value="AsxRS_core"/>
    <property type="match status" value="1"/>
</dbReference>
<dbReference type="CDD" id="cd04318">
    <property type="entry name" value="EcAsnRS_like_N"/>
    <property type="match status" value="1"/>
</dbReference>
<dbReference type="FunFam" id="3.30.930.10:FF:000016">
    <property type="entry name" value="Asparagine--tRNA ligase"/>
    <property type="match status" value="1"/>
</dbReference>
<dbReference type="Gene3D" id="3.30.930.10">
    <property type="entry name" value="Bira Bifunctional Protein, Domain 2"/>
    <property type="match status" value="1"/>
</dbReference>
<dbReference type="Gene3D" id="2.40.50.140">
    <property type="entry name" value="Nucleic acid-binding proteins"/>
    <property type="match status" value="1"/>
</dbReference>
<dbReference type="HAMAP" id="MF_00534">
    <property type="entry name" value="Asn_tRNA_synth"/>
    <property type="match status" value="1"/>
</dbReference>
<dbReference type="InterPro" id="IPR004364">
    <property type="entry name" value="Aa-tRNA-synt_II"/>
</dbReference>
<dbReference type="InterPro" id="IPR006195">
    <property type="entry name" value="aa-tRNA-synth_II"/>
</dbReference>
<dbReference type="InterPro" id="IPR045864">
    <property type="entry name" value="aa-tRNA-synth_II/BPL/LPL"/>
</dbReference>
<dbReference type="InterPro" id="IPR004522">
    <property type="entry name" value="Asn-tRNA-ligase"/>
</dbReference>
<dbReference type="InterPro" id="IPR002312">
    <property type="entry name" value="Asp/Asn-tRNA-synth_IIb"/>
</dbReference>
<dbReference type="InterPro" id="IPR012340">
    <property type="entry name" value="NA-bd_OB-fold"/>
</dbReference>
<dbReference type="InterPro" id="IPR004365">
    <property type="entry name" value="NA-bd_OB_tRNA"/>
</dbReference>
<dbReference type="NCBIfam" id="TIGR00457">
    <property type="entry name" value="asnS"/>
    <property type="match status" value="1"/>
</dbReference>
<dbReference type="NCBIfam" id="NF003037">
    <property type="entry name" value="PRK03932.1"/>
    <property type="match status" value="1"/>
</dbReference>
<dbReference type="PANTHER" id="PTHR22594:SF34">
    <property type="entry name" value="ASPARAGINE--TRNA LIGASE, MITOCHONDRIAL-RELATED"/>
    <property type="match status" value="1"/>
</dbReference>
<dbReference type="PANTHER" id="PTHR22594">
    <property type="entry name" value="ASPARTYL/LYSYL-TRNA SYNTHETASE"/>
    <property type="match status" value="1"/>
</dbReference>
<dbReference type="Pfam" id="PF00152">
    <property type="entry name" value="tRNA-synt_2"/>
    <property type="match status" value="1"/>
</dbReference>
<dbReference type="Pfam" id="PF01336">
    <property type="entry name" value="tRNA_anti-codon"/>
    <property type="match status" value="1"/>
</dbReference>
<dbReference type="PRINTS" id="PR01042">
    <property type="entry name" value="TRNASYNTHASP"/>
</dbReference>
<dbReference type="SUPFAM" id="SSF55681">
    <property type="entry name" value="Class II aaRS and biotin synthetases"/>
    <property type="match status" value="1"/>
</dbReference>
<dbReference type="SUPFAM" id="SSF50249">
    <property type="entry name" value="Nucleic acid-binding proteins"/>
    <property type="match status" value="1"/>
</dbReference>
<dbReference type="PROSITE" id="PS50862">
    <property type="entry name" value="AA_TRNA_LIGASE_II"/>
    <property type="match status" value="1"/>
</dbReference>
<accession>Q492P3</accession>